<evidence type="ECO:0000250" key="1"/>
<evidence type="ECO:0000250" key="2">
    <source>
        <dbReference type="UniProtKB" id="Q3E840"/>
    </source>
</evidence>
<evidence type="ECO:0000255" key="3">
    <source>
        <dbReference type="PROSITE-ProRule" id="PRU00456"/>
    </source>
</evidence>
<evidence type="ECO:0000305" key="4"/>
<proteinExistence type="inferred from homology"/>
<reference key="1">
    <citation type="journal article" date="2004" name="Nature">
        <title>Genome evolution in yeasts.</title>
        <authorList>
            <person name="Dujon B."/>
            <person name="Sherman D."/>
            <person name="Fischer G."/>
            <person name="Durrens P."/>
            <person name="Casaregola S."/>
            <person name="Lafontaine I."/>
            <person name="de Montigny J."/>
            <person name="Marck C."/>
            <person name="Neuveglise C."/>
            <person name="Talla E."/>
            <person name="Goffard N."/>
            <person name="Frangeul L."/>
            <person name="Aigle M."/>
            <person name="Anthouard V."/>
            <person name="Babour A."/>
            <person name="Barbe V."/>
            <person name="Barnay S."/>
            <person name="Blanchin S."/>
            <person name="Beckerich J.-M."/>
            <person name="Beyne E."/>
            <person name="Bleykasten C."/>
            <person name="Boisrame A."/>
            <person name="Boyer J."/>
            <person name="Cattolico L."/>
            <person name="Confanioleri F."/>
            <person name="de Daruvar A."/>
            <person name="Despons L."/>
            <person name="Fabre E."/>
            <person name="Fairhead C."/>
            <person name="Ferry-Dumazet H."/>
            <person name="Groppi A."/>
            <person name="Hantraye F."/>
            <person name="Hennequin C."/>
            <person name="Jauniaux N."/>
            <person name="Joyet P."/>
            <person name="Kachouri R."/>
            <person name="Kerrest A."/>
            <person name="Koszul R."/>
            <person name="Lemaire M."/>
            <person name="Lesur I."/>
            <person name="Ma L."/>
            <person name="Muller H."/>
            <person name="Nicaud J.-M."/>
            <person name="Nikolski M."/>
            <person name="Oztas S."/>
            <person name="Ozier-Kalogeropoulos O."/>
            <person name="Pellenz S."/>
            <person name="Potier S."/>
            <person name="Richard G.-F."/>
            <person name="Straub M.-L."/>
            <person name="Suleau A."/>
            <person name="Swennen D."/>
            <person name="Tekaia F."/>
            <person name="Wesolowski-Louvel M."/>
            <person name="Westhof E."/>
            <person name="Wirth B."/>
            <person name="Zeniou-Meyer M."/>
            <person name="Zivanovic Y."/>
            <person name="Bolotin-Fukuhara M."/>
            <person name="Thierry A."/>
            <person name="Bouchier C."/>
            <person name="Caudron B."/>
            <person name="Scarpelli C."/>
            <person name="Gaillardin C."/>
            <person name="Weissenbach J."/>
            <person name="Wincker P."/>
            <person name="Souciet J.-L."/>
        </authorList>
    </citation>
    <scope>NUCLEOTIDE SEQUENCE [LARGE SCALE GENOMIC DNA]</scope>
    <source>
        <strain>CLIB 122 / E 150</strain>
    </source>
</reference>
<gene>
    <name type="primary">DPH3</name>
    <name type="ordered locus">YALI0F24981g</name>
</gene>
<accession>Q6C0G3</accession>
<dbReference type="EMBL" id="CR382132">
    <property type="protein sequence ID" value="CAG78660.1"/>
    <property type="molecule type" value="Genomic_DNA"/>
</dbReference>
<dbReference type="RefSeq" id="XP_505849.1">
    <property type="nucleotide sequence ID" value="XM_505849.1"/>
</dbReference>
<dbReference type="SMR" id="Q6C0G3"/>
<dbReference type="FunCoup" id="Q6C0G3">
    <property type="interactions" value="344"/>
</dbReference>
<dbReference type="STRING" id="284591.Q6C0G3"/>
<dbReference type="EnsemblFungi" id="CAG78660">
    <property type="protein sequence ID" value="CAG78660"/>
    <property type="gene ID" value="YALI0_F24981g"/>
</dbReference>
<dbReference type="KEGG" id="yli:2908522"/>
<dbReference type="VEuPathDB" id="FungiDB:YALI0_F24981g"/>
<dbReference type="HOGENOM" id="CLU_155991_3_1_1"/>
<dbReference type="InParanoid" id="Q6C0G3"/>
<dbReference type="OMA" id="LFTYPCP"/>
<dbReference type="OrthoDB" id="106502at4891"/>
<dbReference type="UniPathway" id="UPA00559"/>
<dbReference type="Proteomes" id="UP000001300">
    <property type="component" value="Chromosome F"/>
</dbReference>
<dbReference type="GO" id="GO:0005737">
    <property type="term" value="C:cytoplasm"/>
    <property type="evidence" value="ECO:0007669"/>
    <property type="project" value="UniProtKB-SubCell"/>
</dbReference>
<dbReference type="GO" id="GO:0005634">
    <property type="term" value="C:nucleus"/>
    <property type="evidence" value="ECO:0007669"/>
    <property type="project" value="UniProtKB-SubCell"/>
</dbReference>
<dbReference type="GO" id="GO:0008198">
    <property type="term" value="F:ferrous iron binding"/>
    <property type="evidence" value="ECO:0000250"/>
    <property type="project" value="UniProtKB"/>
</dbReference>
<dbReference type="GO" id="GO:0034986">
    <property type="term" value="F:iron chaperone activity"/>
    <property type="evidence" value="ECO:0000250"/>
    <property type="project" value="UniProtKB"/>
</dbReference>
<dbReference type="GO" id="GO:0016491">
    <property type="term" value="F:oxidoreductase activity"/>
    <property type="evidence" value="ECO:0007669"/>
    <property type="project" value="UniProtKB-KW"/>
</dbReference>
<dbReference type="GO" id="GO:0017183">
    <property type="term" value="P:protein histidyl modification to diphthamide"/>
    <property type="evidence" value="ECO:0000250"/>
    <property type="project" value="UniProtKB"/>
</dbReference>
<dbReference type="GO" id="GO:0002926">
    <property type="term" value="P:tRNA wobble base 5-methoxycarbonylmethyl-2-thiouridinylation"/>
    <property type="evidence" value="ECO:0000250"/>
    <property type="project" value="UniProtKB"/>
</dbReference>
<dbReference type="FunFam" id="3.10.660.10:FF:000001">
    <property type="entry name" value="Diphthamide biosynthesis 3"/>
    <property type="match status" value="1"/>
</dbReference>
<dbReference type="Gene3D" id="3.10.660.10">
    <property type="entry name" value="DPH Zinc finger"/>
    <property type="match status" value="1"/>
</dbReference>
<dbReference type="InterPro" id="IPR044248">
    <property type="entry name" value="DPH3/4-like"/>
</dbReference>
<dbReference type="InterPro" id="IPR007872">
    <property type="entry name" value="DPH_MB_dom"/>
</dbReference>
<dbReference type="InterPro" id="IPR036671">
    <property type="entry name" value="DPH_MB_sf"/>
</dbReference>
<dbReference type="PANTHER" id="PTHR21454:SF31">
    <property type="entry name" value="DIPHTHAMIDE BIOSYNTHESIS PROTEIN 3"/>
    <property type="match status" value="1"/>
</dbReference>
<dbReference type="PANTHER" id="PTHR21454">
    <property type="entry name" value="DPH3 HOMOLOG-RELATED"/>
    <property type="match status" value="1"/>
</dbReference>
<dbReference type="Pfam" id="PF05207">
    <property type="entry name" value="Zn_ribbon_CSL"/>
    <property type="match status" value="1"/>
</dbReference>
<dbReference type="SUPFAM" id="SSF144217">
    <property type="entry name" value="CSL zinc finger"/>
    <property type="match status" value="1"/>
</dbReference>
<dbReference type="PROSITE" id="PS51074">
    <property type="entry name" value="DPH_MB"/>
    <property type="match status" value="1"/>
</dbReference>
<protein>
    <recommendedName>
        <fullName>Diphthamide biosynthesis protein 3</fullName>
    </recommendedName>
</protein>
<name>DPH3_YARLI</name>
<keyword id="KW-0963">Cytoplasm</keyword>
<keyword id="KW-0408">Iron</keyword>
<keyword id="KW-0479">Metal-binding</keyword>
<keyword id="KW-0539">Nucleus</keyword>
<keyword id="KW-0560">Oxidoreductase</keyword>
<keyword id="KW-1185">Reference proteome</keyword>
<feature type="chain" id="PRO_0000082638" description="Diphthamide biosynthesis protein 3">
    <location>
        <begin position="1"/>
        <end position="69"/>
    </location>
</feature>
<feature type="domain" description="DPH-type MB" evidence="3">
    <location>
        <begin position="3"/>
        <end position="59"/>
    </location>
</feature>
<feature type="binding site" evidence="2">
    <location>
        <position position="25"/>
    </location>
    <ligand>
        <name>Fe cation</name>
        <dbReference type="ChEBI" id="CHEBI:24875"/>
    </ligand>
</feature>
<feature type="binding site" evidence="2">
    <location>
        <position position="27"/>
    </location>
    <ligand>
        <name>Fe cation</name>
        <dbReference type="ChEBI" id="CHEBI:24875"/>
    </ligand>
</feature>
<feature type="binding site" evidence="2">
    <location>
        <position position="47"/>
    </location>
    <ligand>
        <name>Fe cation</name>
        <dbReference type="ChEBI" id="CHEBI:24875"/>
    </ligand>
</feature>
<feature type="binding site" evidence="2">
    <location>
        <position position="50"/>
    </location>
    <ligand>
        <name>Fe cation</name>
        <dbReference type="ChEBI" id="CHEBI:24875"/>
    </ligand>
</feature>
<sequence>MSFYDEIEIEDMIFDADQGILTYPCPCGDKFQIALDDLKDGEEVAVCPSCSLMIKVIFDPEDLEQFEES</sequence>
<comment type="function">
    <text evidence="2">Required for the first step of diphthamide biosynthesis, a post-translational modification of histidine which occurs in elongation factor 2. DPH1 and DPH2 transfer a 3-amino-3-carboxypropyl (ACP) group from S-adenosyl-L-methionine (SAM) to a histidine residue, the reaction is assisted by a reduction system comprising KTI11/DPH3 and a NADH-dependent reductase, predominantly CBR1. Acts as an electron donor to reduce the Fe-S cluster in DPH1-DPH2 keeping the [4Fe-4S] clusters in the active and reduced state. Restores iron to DPH1-DPH2 iron-sulfur clusters which have degraded from [4Fe-4S] to [3Fe-4S] by donating an iron atom to reform [4Fe-4S] clusters, in a manner dependent on the presence of elongation factor 2 and SAM. Associates with the elongator complex and is required for tRNA Wobble base modifications mediated by the elongator complex. The elongator complex is required for multiple tRNA modifications, including mcm5U (5-methoxycarbonylmethyl uridine), mcm5s 2U (5-methoxycarbonylmethyl-2-thiouridine), and ncm5U (5-carbamoylmethyl uridine).</text>
</comment>
<comment type="catalytic activity">
    <reaction evidence="2">
        <text>[3Fe-4S](1+)-[protein] + Fe(2+)-[Dph3] = [3Fe-4S](0)-[protein] + Fe(3+)-[Dph3]</text>
        <dbReference type="Rhea" id="RHEA:71235"/>
        <dbReference type="Rhea" id="RHEA-COMP:17996"/>
        <dbReference type="Rhea" id="RHEA-COMP:17997"/>
        <dbReference type="Rhea" id="RHEA-COMP:18002"/>
        <dbReference type="Rhea" id="RHEA-COMP:18003"/>
        <dbReference type="ChEBI" id="CHEBI:29033"/>
        <dbReference type="ChEBI" id="CHEBI:29034"/>
        <dbReference type="ChEBI" id="CHEBI:33751"/>
        <dbReference type="ChEBI" id="CHEBI:47402"/>
        <dbReference type="ChEBI" id="CHEBI:83228"/>
    </reaction>
</comment>
<comment type="catalytic activity">
    <reaction evidence="2">
        <text>2 [3Fe-4S](0)-[protein] + 2 Fe(2+)-[Dph3] + NADH = 2 [4Fe-4S](1+)-[protein] + 2 [Dph3] + NAD(+) + H(+)</text>
        <dbReference type="Rhea" id="RHEA:71239"/>
        <dbReference type="Rhea" id="RHEA-COMP:17997"/>
        <dbReference type="Rhea" id="RHEA-COMP:17998"/>
        <dbReference type="Rhea" id="RHEA-COMP:18001"/>
        <dbReference type="Rhea" id="RHEA-COMP:18002"/>
        <dbReference type="ChEBI" id="CHEBI:15378"/>
        <dbReference type="ChEBI" id="CHEBI:29033"/>
        <dbReference type="ChEBI" id="CHEBI:33723"/>
        <dbReference type="ChEBI" id="CHEBI:47402"/>
        <dbReference type="ChEBI" id="CHEBI:57540"/>
        <dbReference type="ChEBI" id="CHEBI:57945"/>
        <dbReference type="ChEBI" id="CHEBI:83228"/>
    </reaction>
</comment>
<comment type="cofactor">
    <cofactor evidence="2">
        <name>Fe(2+)</name>
        <dbReference type="ChEBI" id="CHEBI:29033"/>
    </cofactor>
</comment>
<comment type="pathway">
    <text evidence="2">Protein modification; peptidyl-diphthamide biosynthesis.</text>
</comment>
<comment type="subunit">
    <text evidence="2">Component of the 2-(3-amino-3-carboxypropyl)histidine synthase complex composed of DPH1, DPH2, DPH3 and a NADH-dependent reductase, predominantly CBR1.</text>
</comment>
<comment type="subcellular location">
    <subcellularLocation>
        <location evidence="1">Cytoplasm</location>
    </subcellularLocation>
    <subcellularLocation>
        <location evidence="1">Nucleus</location>
    </subcellularLocation>
</comment>
<comment type="domain">
    <text evidence="2">The DPH-type metal-binding (MB) domain can also bind zinc. However, iron is the physiological binding partner as zinc binding impairs the protein electron donor function.</text>
</comment>
<comment type="similarity">
    <text evidence="4">Belongs to the DPH3 family.</text>
</comment>
<organism>
    <name type="scientific">Yarrowia lipolytica (strain CLIB 122 / E 150)</name>
    <name type="common">Yeast</name>
    <name type="synonym">Candida lipolytica</name>
    <dbReference type="NCBI Taxonomy" id="284591"/>
    <lineage>
        <taxon>Eukaryota</taxon>
        <taxon>Fungi</taxon>
        <taxon>Dikarya</taxon>
        <taxon>Ascomycota</taxon>
        <taxon>Saccharomycotina</taxon>
        <taxon>Dipodascomycetes</taxon>
        <taxon>Dipodascales</taxon>
        <taxon>Dipodascales incertae sedis</taxon>
        <taxon>Yarrowia</taxon>
    </lineage>
</organism>